<organismHost>
    <name type="scientific">Ornithodoros</name>
    <name type="common">relapsing fever ticks</name>
    <dbReference type="NCBI Taxonomy" id="6937"/>
</organismHost>
<organismHost>
    <name type="scientific">Phacochoerus aethiopicus</name>
    <name type="common">Warthog</name>
    <dbReference type="NCBI Taxonomy" id="85517"/>
</organismHost>
<organismHost>
    <name type="scientific">Phacochoerus africanus</name>
    <name type="common">Warthog</name>
    <dbReference type="NCBI Taxonomy" id="41426"/>
</organismHost>
<organismHost>
    <name type="scientific">Potamochoerus larvatus</name>
    <name type="common">Bushpig</name>
    <dbReference type="NCBI Taxonomy" id="273792"/>
</organismHost>
<organismHost>
    <name type="scientific">Sus scrofa</name>
    <name type="common">Pig</name>
    <dbReference type="NCBI Taxonomy" id="9823"/>
</organismHost>
<gene>
    <name type="ordered locus">War-133</name>
</gene>
<name>VF509_ASFWA</name>
<organism>
    <name type="scientific">African swine fever virus (isolate Warthog/Namibia/Wart80/1980)</name>
    <name type="common">ASFV</name>
    <dbReference type="NCBI Taxonomy" id="561444"/>
    <lineage>
        <taxon>Viruses</taxon>
        <taxon>Varidnaviria</taxon>
        <taxon>Bamfordvirae</taxon>
        <taxon>Nucleocytoviricota</taxon>
        <taxon>Pokkesviricetes</taxon>
        <taxon>Asfuvirales</taxon>
        <taxon>Asfarviridae</taxon>
        <taxon>Asfivirus</taxon>
        <taxon>African swine fever virus</taxon>
    </lineage>
</organism>
<accession>P0C9A9</accession>
<comment type="catalytic activity">
    <reaction>
        <text>ATP + H2O = ADP + phosphate + H(+)</text>
        <dbReference type="Rhea" id="RHEA:13065"/>
        <dbReference type="ChEBI" id="CHEBI:15377"/>
        <dbReference type="ChEBI" id="CHEBI:15378"/>
        <dbReference type="ChEBI" id="CHEBI:30616"/>
        <dbReference type="ChEBI" id="CHEBI:43474"/>
        <dbReference type="ChEBI" id="CHEBI:456216"/>
        <dbReference type="EC" id="3.6.4.13"/>
    </reaction>
</comment>
<comment type="induction">
    <text evidence="2">Expressed in the late phase of the viral replicative cycle.</text>
</comment>
<comment type="similarity">
    <text evidence="2">Belongs to the DEAD box helicase family. DEAH subfamily.</text>
</comment>
<reference key="1">
    <citation type="submission" date="2003-03" db="EMBL/GenBank/DDBJ databases">
        <title>African swine fever virus genomes.</title>
        <authorList>
            <person name="Kutish G.F."/>
            <person name="Rock D.L."/>
        </authorList>
    </citation>
    <scope>NUCLEOTIDE SEQUENCE [LARGE SCALE GENOMIC DNA]</scope>
</reference>
<evidence type="ECO:0000255" key="1">
    <source>
        <dbReference type="PROSITE-ProRule" id="PRU00541"/>
    </source>
</evidence>
<evidence type="ECO:0000305" key="2"/>
<proteinExistence type="inferred from homology"/>
<feature type="chain" id="PRO_0000373115" description="Putative ATP-dependent RNA helicase QP509L">
    <location>
        <begin position="1"/>
        <end position="513"/>
    </location>
</feature>
<feature type="domain" description="Helicase ATP-binding" evidence="1">
    <location>
        <begin position="110"/>
        <end position="262"/>
    </location>
</feature>
<feature type="short sequence motif" description="DEAH box">
    <location>
        <begin position="215"/>
        <end position="218"/>
    </location>
</feature>
<feature type="binding site" evidence="1">
    <location>
        <begin position="123"/>
        <end position="130"/>
    </location>
    <ligand>
        <name>ATP</name>
        <dbReference type="ChEBI" id="CHEBI:30616"/>
    </ligand>
</feature>
<keyword id="KW-0067">ATP-binding</keyword>
<keyword id="KW-0347">Helicase</keyword>
<keyword id="KW-0378">Hydrolase</keyword>
<keyword id="KW-0426">Late protein</keyword>
<keyword id="KW-0547">Nucleotide-binding</keyword>
<protein>
    <recommendedName>
        <fullName>Putative ATP-dependent RNA helicase QP509L</fullName>
        <ecNumber>3.6.4.13</ecNumber>
    </recommendedName>
</protein>
<dbReference type="EC" id="3.6.4.13"/>
<dbReference type="EMBL" id="AY261366">
    <property type="status" value="NOT_ANNOTATED_CDS"/>
    <property type="molecule type" value="Genomic_DNA"/>
</dbReference>
<dbReference type="Proteomes" id="UP000000858">
    <property type="component" value="Segment"/>
</dbReference>
<dbReference type="GO" id="GO:0005524">
    <property type="term" value="F:ATP binding"/>
    <property type="evidence" value="ECO:0007669"/>
    <property type="project" value="UniProtKB-KW"/>
</dbReference>
<dbReference type="GO" id="GO:0016887">
    <property type="term" value="F:ATP hydrolysis activity"/>
    <property type="evidence" value="ECO:0007669"/>
    <property type="project" value="RHEA"/>
</dbReference>
<dbReference type="GO" id="GO:0003677">
    <property type="term" value="F:DNA binding"/>
    <property type="evidence" value="ECO:0007669"/>
    <property type="project" value="InterPro"/>
</dbReference>
<dbReference type="GO" id="GO:0003724">
    <property type="term" value="F:RNA helicase activity"/>
    <property type="evidence" value="ECO:0007669"/>
    <property type="project" value="UniProtKB-EC"/>
</dbReference>
<dbReference type="Gene3D" id="3.40.50.300">
    <property type="entry name" value="P-loop containing nucleotide triphosphate hydrolases"/>
    <property type="match status" value="2"/>
</dbReference>
<dbReference type="InterPro" id="IPR006935">
    <property type="entry name" value="Helicase/UvrB_N"/>
</dbReference>
<dbReference type="InterPro" id="IPR014001">
    <property type="entry name" value="Helicase_ATP-bd"/>
</dbReference>
<dbReference type="InterPro" id="IPR050742">
    <property type="entry name" value="Helicase_Restrict-Modif_Enz"/>
</dbReference>
<dbReference type="InterPro" id="IPR027417">
    <property type="entry name" value="P-loop_NTPase"/>
</dbReference>
<dbReference type="PANTHER" id="PTHR47396:SF1">
    <property type="entry name" value="ATP-DEPENDENT HELICASE IRC3-RELATED"/>
    <property type="match status" value="1"/>
</dbReference>
<dbReference type="PANTHER" id="PTHR47396">
    <property type="entry name" value="TYPE I RESTRICTION ENZYME ECOKI R PROTEIN"/>
    <property type="match status" value="1"/>
</dbReference>
<dbReference type="Pfam" id="PF04851">
    <property type="entry name" value="ResIII"/>
    <property type="match status" value="1"/>
</dbReference>
<dbReference type="SMART" id="SM00487">
    <property type="entry name" value="DEXDc"/>
    <property type="match status" value="1"/>
</dbReference>
<dbReference type="SUPFAM" id="SSF52540">
    <property type="entry name" value="P-loop containing nucleoside triphosphate hydrolases"/>
    <property type="match status" value="2"/>
</dbReference>
<dbReference type="PROSITE" id="PS00690">
    <property type="entry name" value="DEAH_ATP_HELICASE"/>
    <property type="match status" value="1"/>
</dbReference>
<dbReference type="PROSITE" id="PS51192">
    <property type="entry name" value="HELICASE_ATP_BIND_1"/>
    <property type="match status" value="1"/>
</dbReference>
<sequence length="513" mass="58561">MEAIISFAGIGINYKKLQSKLQHNFGRLLKALTVTARALPGQPKHIAIRQETAFTLQGEYIYFPILLRKQFEMFNMVYTAHPVSLRALPCVETEFPLFNYQQEMVDKIHKKLLSPYGRFYLHLNTGLGKTRIAISIIQKLLYPTLVIVPTKAIQIQWIDELTLLLPHLRVAAYNNAACKKKDMTSKEYDVIVGIINTLRKKPEQFFEPFGLVVLDEAHELHSPENYKIFWKIQLSRILGLSATPLDRPDGMDKIIIHHLGQPQRTVSPTTTFSGYVREIEYQGHPDFVSPVCINEKVSAIATIDKLLQDPSRIQLVVNEAKRLYSLHTAEPHKWGTDEPYGIIIFVEFRKLLEIFYQALSKEFKDVQIIVPEVALLCGGVSNTALSQAHSASIILLTYGYGRRGISFKHMTSIIMATPRRNNMEQILGRITRQGSDEKKVRIVVDIKDTLSPLSSQVYDRHRIYKKKGYPIFKCSASYQQPYSSNEVLIWDPYNESCLACTTTPPSPSKQKHT</sequence>